<comment type="function">
    <text evidence="1">Acts as a component of the essential kinetochore-associated NDC80 complex, which is required for chromosome segregation and spindle checkpoint activity.</text>
</comment>
<comment type="subunit">
    <text evidence="1">Component of the NDC80 complex, which consists of NDC80, NUF2, SPC24 and SPC25.</text>
</comment>
<comment type="subcellular location">
    <subcellularLocation>
        <location evidence="1">Nucleus</location>
    </subcellularLocation>
    <subcellularLocation>
        <location evidence="1">Chromosome</location>
        <location evidence="1">Centromere</location>
        <location evidence="1">Kinetochore</location>
    </subcellularLocation>
    <text evidence="1">Associated with kinetochores.</text>
</comment>
<comment type="similarity">
    <text evidence="3">Belongs to the NUF2 family.</text>
</comment>
<reference key="1">
    <citation type="journal article" date="2004" name="Nature">
        <title>Genome evolution in yeasts.</title>
        <authorList>
            <person name="Dujon B."/>
            <person name="Sherman D."/>
            <person name="Fischer G."/>
            <person name="Durrens P."/>
            <person name="Casaregola S."/>
            <person name="Lafontaine I."/>
            <person name="de Montigny J."/>
            <person name="Marck C."/>
            <person name="Neuveglise C."/>
            <person name="Talla E."/>
            <person name="Goffard N."/>
            <person name="Frangeul L."/>
            <person name="Aigle M."/>
            <person name="Anthouard V."/>
            <person name="Babour A."/>
            <person name="Barbe V."/>
            <person name="Barnay S."/>
            <person name="Blanchin S."/>
            <person name="Beckerich J.-M."/>
            <person name="Beyne E."/>
            <person name="Bleykasten C."/>
            <person name="Boisrame A."/>
            <person name="Boyer J."/>
            <person name="Cattolico L."/>
            <person name="Confanioleri F."/>
            <person name="de Daruvar A."/>
            <person name="Despons L."/>
            <person name="Fabre E."/>
            <person name="Fairhead C."/>
            <person name="Ferry-Dumazet H."/>
            <person name="Groppi A."/>
            <person name="Hantraye F."/>
            <person name="Hennequin C."/>
            <person name="Jauniaux N."/>
            <person name="Joyet P."/>
            <person name="Kachouri R."/>
            <person name="Kerrest A."/>
            <person name="Koszul R."/>
            <person name="Lemaire M."/>
            <person name="Lesur I."/>
            <person name="Ma L."/>
            <person name="Muller H."/>
            <person name="Nicaud J.-M."/>
            <person name="Nikolski M."/>
            <person name="Oztas S."/>
            <person name="Ozier-Kalogeropoulos O."/>
            <person name="Pellenz S."/>
            <person name="Potier S."/>
            <person name="Richard G.-F."/>
            <person name="Straub M.-L."/>
            <person name="Suleau A."/>
            <person name="Swennen D."/>
            <person name="Tekaia F."/>
            <person name="Wesolowski-Louvel M."/>
            <person name="Westhof E."/>
            <person name="Wirth B."/>
            <person name="Zeniou-Meyer M."/>
            <person name="Zivanovic Y."/>
            <person name="Bolotin-Fukuhara M."/>
            <person name="Thierry A."/>
            <person name="Bouchier C."/>
            <person name="Caudron B."/>
            <person name="Scarpelli C."/>
            <person name="Gaillardin C."/>
            <person name="Weissenbach J."/>
            <person name="Wincker P."/>
            <person name="Souciet J.-L."/>
        </authorList>
    </citation>
    <scope>NUCLEOTIDE SEQUENCE [LARGE SCALE GENOMIC DNA]</scope>
    <source>
        <strain>CLIB 122 / E 150</strain>
    </source>
</reference>
<feature type="chain" id="PRO_0000246656" description="Probable kinetochore protein NUF2">
    <location>
        <begin position="1"/>
        <end position="452"/>
    </location>
</feature>
<feature type="coiled-coil region" evidence="2">
    <location>
        <begin position="152"/>
        <end position="280"/>
    </location>
</feature>
<feature type="coiled-coil region" evidence="2">
    <location>
        <begin position="339"/>
        <end position="447"/>
    </location>
</feature>
<dbReference type="EMBL" id="CR382131">
    <property type="protein sequence ID" value="CAG80262.1"/>
    <property type="molecule type" value="Genomic_DNA"/>
</dbReference>
<dbReference type="RefSeq" id="XP_504658.1">
    <property type="nucleotide sequence ID" value="XM_504658.1"/>
</dbReference>
<dbReference type="SMR" id="Q6C3V4"/>
<dbReference type="FunCoup" id="Q6C3V4">
    <property type="interactions" value="282"/>
</dbReference>
<dbReference type="STRING" id="284591.Q6C3V4"/>
<dbReference type="EnsemblFungi" id="CAG80262">
    <property type="protein sequence ID" value="CAG80262"/>
    <property type="gene ID" value="YALI0_E31867g"/>
</dbReference>
<dbReference type="KEGG" id="yli:2911880"/>
<dbReference type="VEuPathDB" id="FungiDB:YALI0_E31867g"/>
<dbReference type="HOGENOM" id="CLU_025461_2_0_1"/>
<dbReference type="InParanoid" id="Q6C3V4"/>
<dbReference type="OMA" id="TKIIEWD"/>
<dbReference type="OrthoDB" id="8621at4891"/>
<dbReference type="Proteomes" id="UP000001300">
    <property type="component" value="Chromosome E"/>
</dbReference>
<dbReference type="GO" id="GO:0031262">
    <property type="term" value="C:Ndc80 complex"/>
    <property type="evidence" value="ECO:0000250"/>
    <property type="project" value="UniProtKB"/>
</dbReference>
<dbReference type="GO" id="GO:0005634">
    <property type="term" value="C:nucleus"/>
    <property type="evidence" value="ECO:0007669"/>
    <property type="project" value="UniProtKB-SubCell"/>
</dbReference>
<dbReference type="GO" id="GO:0008017">
    <property type="term" value="F:microtubule binding"/>
    <property type="evidence" value="ECO:0000250"/>
    <property type="project" value="UniProtKB"/>
</dbReference>
<dbReference type="GO" id="GO:0044877">
    <property type="term" value="F:protein-containing complex binding"/>
    <property type="evidence" value="ECO:0000318"/>
    <property type="project" value="GO_Central"/>
</dbReference>
<dbReference type="GO" id="GO:0051315">
    <property type="term" value="P:attachment of mitotic spindle microtubules to kinetochore"/>
    <property type="evidence" value="ECO:0000318"/>
    <property type="project" value="GO_Central"/>
</dbReference>
<dbReference type="GO" id="GO:0051301">
    <property type="term" value="P:cell division"/>
    <property type="evidence" value="ECO:0007669"/>
    <property type="project" value="UniProtKB-KW"/>
</dbReference>
<dbReference type="GO" id="GO:0051383">
    <property type="term" value="P:kinetochore organization"/>
    <property type="evidence" value="ECO:0000318"/>
    <property type="project" value="GO_Central"/>
</dbReference>
<dbReference type="GO" id="GO:0045132">
    <property type="term" value="P:meiotic chromosome segregation"/>
    <property type="evidence" value="ECO:0000318"/>
    <property type="project" value="GO_Central"/>
</dbReference>
<dbReference type="GO" id="GO:0007052">
    <property type="term" value="P:mitotic spindle organization"/>
    <property type="evidence" value="ECO:0000318"/>
    <property type="project" value="GO_Central"/>
</dbReference>
<dbReference type="Gene3D" id="1.10.418.60">
    <property type="entry name" value="Ncd80 complex, Nuf2 subunit"/>
    <property type="match status" value="1"/>
</dbReference>
<dbReference type="InterPro" id="IPR005549">
    <property type="entry name" value="Kinetochore_Nuf2_N"/>
</dbReference>
<dbReference type="InterPro" id="IPR041112">
    <property type="entry name" value="Nuf2_DHR10-like"/>
</dbReference>
<dbReference type="InterPro" id="IPR038275">
    <property type="entry name" value="Nuf2_N_sf"/>
</dbReference>
<dbReference type="PANTHER" id="PTHR21650:SF2">
    <property type="entry name" value="KINETOCHORE PROTEIN NUF2"/>
    <property type="match status" value="1"/>
</dbReference>
<dbReference type="PANTHER" id="PTHR21650">
    <property type="entry name" value="MEMBRALIN/KINETOCHORE PROTEIN NUF2"/>
    <property type="match status" value="1"/>
</dbReference>
<dbReference type="Pfam" id="PF03800">
    <property type="entry name" value="Nuf2"/>
    <property type="match status" value="1"/>
</dbReference>
<dbReference type="Pfam" id="PF18595">
    <property type="entry name" value="Nuf2_DHR10-like"/>
    <property type="match status" value="1"/>
</dbReference>
<keyword id="KW-0131">Cell cycle</keyword>
<keyword id="KW-0132">Cell division</keyword>
<keyword id="KW-0137">Centromere</keyword>
<keyword id="KW-0158">Chromosome</keyword>
<keyword id="KW-0175">Coiled coil</keyword>
<keyword id="KW-0995">Kinetochore</keyword>
<keyword id="KW-0498">Mitosis</keyword>
<keyword id="KW-0539">Nucleus</keyword>
<keyword id="KW-1185">Reference proteome</keyword>
<sequence length="452" mass="52702">MSHMAYTPKKQVRTRNTHAAFPTLPIDEIVQCLPGLDCMVTEEELLRPTSKFVQSMYAQIATSLLGINRESMAPALAACAAGTEHPETQEDARMLFALQKPLYDLFVASGVTDYNISDILKPSPERLRVQLSAIINYARFREIREKWYEKMSEELNEEEEARTMRLKNQEEKLRRKVELIALIGDTPDQDLVEQHRINDSRKSELKRLHDQNLQLNDERERNKAELRVVVNRLRHKHQLMESLQEEVARLNSYVVDNPKNLQEEVVELSKRVKERETVRRMLGERVQKLDLSVDSFKDFQVDVSSCLSAFQKLSDEQEAHSKAVRKITTQKELLEHVGINSRQAEGRRDVLQQEIEAAESKIARIQQDMSESDRQTSRRMEELRRQIGTLDAERALVVQQNNTAQKRLAELENDMATERDRYEAQLKMAREEAEKLQTQFREYFVEVGRRLN</sequence>
<accession>Q6C3V4</accession>
<protein>
    <recommendedName>
        <fullName>Probable kinetochore protein NUF2</fullName>
    </recommendedName>
</protein>
<name>NUF2_YARLI</name>
<gene>
    <name type="primary">NUF2</name>
    <name type="ordered locus">YALI0E31867g</name>
</gene>
<evidence type="ECO:0000250" key="1"/>
<evidence type="ECO:0000255" key="2"/>
<evidence type="ECO:0000305" key="3"/>
<organism>
    <name type="scientific">Yarrowia lipolytica (strain CLIB 122 / E 150)</name>
    <name type="common">Yeast</name>
    <name type="synonym">Candida lipolytica</name>
    <dbReference type="NCBI Taxonomy" id="284591"/>
    <lineage>
        <taxon>Eukaryota</taxon>
        <taxon>Fungi</taxon>
        <taxon>Dikarya</taxon>
        <taxon>Ascomycota</taxon>
        <taxon>Saccharomycotina</taxon>
        <taxon>Dipodascomycetes</taxon>
        <taxon>Dipodascales</taxon>
        <taxon>Dipodascales incertae sedis</taxon>
        <taxon>Yarrowia</taxon>
    </lineage>
</organism>
<proteinExistence type="inferred from homology"/>